<name>KDSB_DECAR</name>
<evidence type="ECO:0000255" key="1">
    <source>
        <dbReference type="HAMAP-Rule" id="MF_00057"/>
    </source>
</evidence>
<accession>Q47B45</accession>
<gene>
    <name evidence="1" type="primary">kdsB</name>
    <name type="ordered locus">Daro_3206</name>
</gene>
<sequence>MSGLAFKVVIPARYASTRLPAKPLLDLGGKPMVVRVAERARLSGADEIWVATDHLEVRAAAEAHEVAALMTRSDHATGTDRLAEVVEQRGWAGDTIIVNVQGDEPLIEPEVIIQTARQLAASGADIATVAHPITDAADFFNPNVVKVVCRADGDAAYFSRAPIPYARDHFAKEDGGETLPANFPAYRHVGLYAYRASFLKAYAGLMPAPTEHFESLEQLRALWHGYRISVTLIDAAPAPGVDTPEDAERMRKLFDRANNCE</sequence>
<organism>
    <name type="scientific">Dechloromonas aromatica (strain RCB)</name>
    <dbReference type="NCBI Taxonomy" id="159087"/>
    <lineage>
        <taxon>Bacteria</taxon>
        <taxon>Pseudomonadati</taxon>
        <taxon>Pseudomonadota</taxon>
        <taxon>Betaproteobacteria</taxon>
        <taxon>Rhodocyclales</taxon>
        <taxon>Azonexaceae</taxon>
        <taxon>Dechloromonas</taxon>
    </lineage>
</organism>
<comment type="function">
    <text evidence="1">Activates KDO (a required 8-carbon sugar) for incorporation into bacterial lipopolysaccharide in Gram-negative bacteria.</text>
</comment>
<comment type="catalytic activity">
    <reaction evidence="1">
        <text>3-deoxy-alpha-D-manno-oct-2-ulosonate + CTP = CMP-3-deoxy-beta-D-manno-octulosonate + diphosphate</text>
        <dbReference type="Rhea" id="RHEA:23448"/>
        <dbReference type="ChEBI" id="CHEBI:33019"/>
        <dbReference type="ChEBI" id="CHEBI:37563"/>
        <dbReference type="ChEBI" id="CHEBI:85986"/>
        <dbReference type="ChEBI" id="CHEBI:85987"/>
        <dbReference type="EC" id="2.7.7.38"/>
    </reaction>
</comment>
<comment type="pathway">
    <text evidence="1">Nucleotide-sugar biosynthesis; CMP-3-deoxy-D-manno-octulosonate biosynthesis; CMP-3-deoxy-D-manno-octulosonate from 3-deoxy-D-manno-octulosonate and CTP: step 1/1.</text>
</comment>
<comment type="pathway">
    <text evidence="1">Bacterial outer membrane biogenesis; lipopolysaccharide biosynthesis.</text>
</comment>
<comment type="subcellular location">
    <subcellularLocation>
        <location evidence="1">Cytoplasm</location>
    </subcellularLocation>
</comment>
<comment type="similarity">
    <text evidence="1">Belongs to the KdsB family.</text>
</comment>
<reference key="1">
    <citation type="journal article" date="2009" name="BMC Genomics">
        <title>Metabolic analysis of the soil microbe Dechloromonas aromatica str. RCB: indications of a surprisingly complex life-style and cryptic anaerobic pathways for aromatic degradation.</title>
        <authorList>
            <person name="Salinero K.K."/>
            <person name="Keller K."/>
            <person name="Feil W.S."/>
            <person name="Feil H."/>
            <person name="Trong S."/>
            <person name="Di Bartolo G."/>
            <person name="Lapidus A."/>
        </authorList>
    </citation>
    <scope>NUCLEOTIDE SEQUENCE [LARGE SCALE GENOMIC DNA]</scope>
    <source>
        <strain>RCB</strain>
    </source>
</reference>
<dbReference type="EC" id="2.7.7.38" evidence="1"/>
<dbReference type="EMBL" id="CP000089">
    <property type="protein sequence ID" value="AAZ47936.1"/>
    <property type="molecule type" value="Genomic_DNA"/>
</dbReference>
<dbReference type="SMR" id="Q47B45"/>
<dbReference type="STRING" id="159087.Daro_3206"/>
<dbReference type="KEGG" id="dar:Daro_3206"/>
<dbReference type="eggNOG" id="COG1212">
    <property type="taxonomic scope" value="Bacteria"/>
</dbReference>
<dbReference type="HOGENOM" id="CLU_065038_1_0_4"/>
<dbReference type="OrthoDB" id="9815559at2"/>
<dbReference type="UniPathway" id="UPA00030"/>
<dbReference type="UniPathway" id="UPA00358">
    <property type="reaction ID" value="UER00476"/>
</dbReference>
<dbReference type="GO" id="GO:0005829">
    <property type="term" value="C:cytosol"/>
    <property type="evidence" value="ECO:0007669"/>
    <property type="project" value="TreeGrafter"/>
</dbReference>
<dbReference type="GO" id="GO:0008690">
    <property type="term" value="F:3-deoxy-manno-octulosonate cytidylyltransferase activity"/>
    <property type="evidence" value="ECO:0007669"/>
    <property type="project" value="UniProtKB-UniRule"/>
</dbReference>
<dbReference type="GO" id="GO:0033468">
    <property type="term" value="P:CMP-keto-3-deoxy-D-manno-octulosonic acid biosynthetic process"/>
    <property type="evidence" value="ECO:0007669"/>
    <property type="project" value="UniProtKB-UniRule"/>
</dbReference>
<dbReference type="GO" id="GO:0009103">
    <property type="term" value="P:lipopolysaccharide biosynthetic process"/>
    <property type="evidence" value="ECO:0007669"/>
    <property type="project" value="UniProtKB-UniRule"/>
</dbReference>
<dbReference type="CDD" id="cd02517">
    <property type="entry name" value="CMP-KDO-Synthetase"/>
    <property type="match status" value="1"/>
</dbReference>
<dbReference type="FunFam" id="3.90.550.10:FF:000011">
    <property type="entry name" value="3-deoxy-manno-octulosonate cytidylyltransferase"/>
    <property type="match status" value="1"/>
</dbReference>
<dbReference type="Gene3D" id="3.90.550.10">
    <property type="entry name" value="Spore Coat Polysaccharide Biosynthesis Protein SpsA, Chain A"/>
    <property type="match status" value="1"/>
</dbReference>
<dbReference type="HAMAP" id="MF_00057">
    <property type="entry name" value="KdsB"/>
    <property type="match status" value="1"/>
</dbReference>
<dbReference type="InterPro" id="IPR003329">
    <property type="entry name" value="Cytidylyl_trans"/>
</dbReference>
<dbReference type="InterPro" id="IPR004528">
    <property type="entry name" value="KdsB"/>
</dbReference>
<dbReference type="InterPro" id="IPR029044">
    <property type="entry name" value="Nucleotide-diphossugar_trans"/>
</dbReference>
<dbReference type="NCBIfam" id="TIGR00466">
    <property type="entry name" value="kdsB"/>
    <property type="match status" value="1"/>
</dbReference>
<dbReference type="NCBIfam" id="NF003952">
    <property type="entry name" value="PRK05450.1-5"/>
    <property type="match status" value="1"/>
</dbReference>
<dbReference type="NCBIfam" id="NF009905">
    <property type="entry name" value="PRK13368.1"/>
    <property type="match status" value="1"/>
</dbReference>
<dbReference type="PANTHER" id="PTHR42866">
    <property type="entry name" value="3-DEOXY-MANNO-OCTULOSONATE CYTIDYLYLTRANSFERASE"/>
    <property type="match status" value="1"/>
</dbReference>
<dbReference type="PANTHER" id="PTHR42866:SF2">
    <property type="entry name" value="3-DEOXY-MANNO-OCTULOSONATE CYTIDYLYLTRANSFERASE, MITOCHONDRIAL"/>
    <property type="match status" value="1"/>
</dbReference>
<dbReference type="Pfam" id="PF02348">
    <property type="entry name" value="CTP_transf_3"/>
    <property type="match status" value="1"/>
</dbReference>
<dbReference type="SUPFAM" id="SSF53448">
    <property type="entry name" value="Nucleotide-diphospho-sugar transferases"/>
    <property type="match status" value="1"/>
</dbReference>
<keyword id="KW-0963">Cytoplasm</keyword>
<keyword id="KW-0448">Lipopolysaccharide biosynthesis</keyword>
<keyword id="KW-0548">Nucleotidyltransferase</keyword>
<keyword id="KW-0808">Transferase</keyword>
<feature type="chain" id="PRO_0000370057" description="3-deoxy-manno-octulosonate cytidylyltransferase">
    <location>
        <begin position="1"/>
        <end position="261"/>
    </location>
</feature>
<proteinExistence type="inferred from homology"/>
<protein>
    <recommendedName>
        <fullName evidence="1">3-deoxy-manno-octulosonate cytidylyltransferase</fullName>
        <ecNumber evidence="1">2.7.7.38</ecNumber>
    </recommendedName>
    <alternativeName>
        <fullName evidence="1">CMP-2-keto-3-deoxyoctulosonic acid synthase</fullName>
        <shortName evidence="1">CKS</shortName>
        <shortName evidence="1">CMP-KDO synthase</shortName>
    </alternativeName>
</protein>